<proteinExistence type="inferred from homology"/>
<sequence length="103" mass="11752">MSNKQKIRIRLKAFDHQVLDQSAEKIVETAKRTGAKVSGPVPLPTEKEIITILRAPHKYKDSREQFEMRTHKRLIDVVLPTPKTVDALMRLDLPAGVDIEIKL</sequence>
<organism>
    <name type="scientific">Ruminiclostridium cellulolyticum (strain ATCC 35319 / DSM 5812 / JCM 6584 / H10)</name>
    <name type="common">Clostridium cellulolyticum</name>
    <dbReference type="NCBI Taxonomy" id="394503"/>
    <lineage>
        <taxon>Bacteria</taxon>
        <taxon>Bacillati</taxon>
        <taxon>Bacillota</taxon>
        <taxon>Clostridia</taxon>
        <taxon>Eubacteriales</taxon>
        <taxon>Oscillospiraceae</taxon>
        <taxon>Ruminiclostridium</taxon>
    </lineage>
</organism>
<name>RS10_RUMCH</name>
<keyword id="KW-1185">Reference proteome</keyword>
<keyword id="KW-0687">Ribonucleoprotein</keyword>
<keyword id="KW-0689">Ribosomal protein</keyword>
<protein>
    <recommendedName>
        <fullName evidence="1">Small ribosomal subunit protein uS10</fullName>
    </recommendedName>
    <alternativeName>
        <fullName evidence="2">30S ribosomal protein S10</fullName>
    </alternativeName>
</protein>
<reference key="1">
    <citation type="submission" date="2009-01" db="EMBL/GenBank/DDBJ databases">
        <title>Complete sequence of Clostridium cellulolyticum H10.</title>
        <authorList>
            <consortium name="US DOE Joint Genome Institute"/>
            <person name="Lucas S."/>
            <person name="Copeland A."/>
            <person name="Lapidus A."/>
            <person name="Glavina del Rio T."/>
            <person name="Dalin E."/>
            <person name="Tice H."/>
            <person name="Bruce D."/>
            <person name="Goodwin L."/>
            <person name="Pitluck S."/>
            <person name="Chertkov O."/>
            <person name="Saunders E."/>
            <person name="Brettin T."/>
            <person name="Detter J.C."/>
            <person name="Han C."/>
            <person name="Larimer F."/>
            <person name="Land M."/>
            <person name="Hauser L."/>
            <person name="Kyrpides N."/>
            <person name="Ivanova N."/>
            <person name="Zhou J."/>
            <person name="Richardson P."/>
        </authorList>
    </citation>
    <scope>NUCLEOTIDE SEQUENCE [LARGE SCALE GENOMIC DNA]</scope>
    <source>
        <strain>ATCC 35319 / DSM 5812 / JCM 6584 / H10</strain>
    </source>
</reference>
<dbReference type="EMBL" id="CP001348">
    <property type="protein sequence ID" value="ACL75135.1"/>
    <property type="molecule type" value="Genomic_DNA"/>
</dbReference>
<dbReference type="RefSeq" id="WP_004620876.1">
    <property type="nucleotide sequence ID" value="NC_011898.1"/>
</dbReference>
<dbReference type="SMR" id="B8I7X8"/>
<dbReference type="STRING" id="394503.Ccel_0757"/>
<dbReference type="KEGG" id="cce:Ccel_0757"/>
<dbReference type="eggNOG" id="COG0051">
    <property type="taxonomic scope" value="Bacteria"/>
</dbReference>
<dbReference type="HOGENOM" id="CLU_122625_1_3_9"/>
<dbReference type="OrthoDB" id="9804464at2"/>
<dbReference type="Proteomes" id="UP000001349">
    <property type="component" value="Chromosome"/>
</dbReference>
<dbReference type="GO" id="GO:1990904">
    <property type="term" value="C:ribonucleoprotein complex"/>
    <property type="evidence" value="ECO:0007669"/>
    <property type="project" value="UniProtKB-KW"/>
</dbReference>
<dbReference type="GO" id="GO:0005840">
    <property type="term" value="C:ribosome"/>
    <property type="evidence" value="ECO:0007669"/>
    <property type="project" value="UniProtKB-KW"/>
</dbReference>
<dbReference type="GO" id="GO:0003735">
    <property type="term" value="F:structural constituent of ribosome"/>
    <property type="evidence" value="ECO:0007669"/>
    <property type="project" value="InterPro"/>
</dbReference>
<dbReference type="GO" id="GO:0000049">
    <property type="term" value="F:tRNA binding"/>
    <property type="evidence" value="ECO:0007669"/>
    <property type="project" value="UniProtKB-UniRule"/>
</dbReference>
<dbReference type="GO" id="GO:0006412">
    <property type="term" value="P:translation"/>
    <property type="evidence" value="ECO:0007669"/>
    <property type="project" value="UniProtKB-UniRule"/>
</dbReference>
<dbReference type="FunFam" id="3.30.70.600:FF:000001">
    <property type="entry name" value="30S ribosomal protein S10"/>
    <property type="match status" value="1"/>
</dbReference>
<dbReference type="Gene3D" id="3.30.70.600">
    <property type="entry name" value="Ribosomal protein S10 domain"/>
    <property type="match status" value="1"/>
</dbReference>
<dbReference type="HAMAP" id="MF_00508">
    <property type="entry name" value="Ribosomal_uS10"/>
    <property type="match status" value="1"/>
</dbReference>
<dbReference type="InterPro" id="IPR001848">
    <property type="entry name" value="Ribosomal_uS10"/>
</dbReference>
<dbReference type="InterPro" id="IPR018268">
    <property type="entry name" value="Ribosomal_uS10_CS"/>
</dbReference>
<dbReference type="InterPro" id="IPR027486">
    <property type="entry name" value="Ribosomal_uS10_dom"/>
</dbReference>
<dbReference type="InterPro" id="IPR036838">
    <property type="entry name" value="Ribosomal_uS10_dom_sf"/>
</dbReference>
<dbReference type="NCBIfam" id="NF001861">
    <property type="entry name" value="PRK00596.1"/>
    <property type="match status" value="1"/>
</dbReference>
<dbReference type="NCBIfam" id="TIGR01049">
    <property type="entry name" value="rpsJ_bact"/>
    <property type="match status" value="1"/>
</dbReference>
<dbReference type="PANTHER" id="PTHR11700">
    <property type="entry name" value="30S RIBOSOMAL PROTEIN S10 FAMILY MEMBER"/>
    <property type="match status" value="1"/>
</dbReference>
<dbReference type="Pfam" id="PF00338">
    <property type="entry name" value="Ribosomal_S10"/>
    <property type="match status" value="1"/>
</dbReference>
<dbReference type="PRINTS" id="PR00971">
    <property type="entry name" value="RIBOSOMALS10"/>
</dbReference>
<dbReference type="SMART" id="SM01403">
    <property type="entry name" value="Ribosomal_S10"/>
    <property type="match status" value="1"/>
</dbReference>
<dbReference type="SUPFAM" id="SSF54999">
    <property type="entry name" value="Ribosomal protein S10"/>
    <property type="match status" value="1"/>
</dbReference>
<dbReference type="PROSITE" id="PS00361">
    <property type="entry name" value="RIBOSOMAL_S10"/>
    <property type="match status" value="1"/>
</dbReference>
<feature type="chain" id="PRO_1000196300" description="Small ribosomal subunit protein uS10">
    <location>
        <begin position="1"/>
        <end position="103"/>
    </location>
</feature>
<accession>B8I7X8</accession>
<comment type="function">
    <text evidence="1">Involved in the binding of tRNA to the ribosomes.</text>
</comment>
<comment type="subunit">
    <text evidence="1">Part of the 30S ribosomal subunit.</text>
</comment>
<comment type="similarity">
    <text evidence="1">Belongs to the universal ribosomal protein uS10 family.</text>
</comment>
<gene>
    <name evidence="1" type="primary">rpsJ</name>
    <name type="ordered locus">Ccel_0757</name>
</gene>
<evidence type="ECO:0000255" key="1">
    <source>
        <dbReference type="HAMAP-Rule" id="MF_00508"/>
    </source>
</evidence>
<evidence type="ECO:0000305" key="2"/>